<dbReference type="EMBL" id="X01800">
    <property type="protein sequence ID" value="CAA25931.1"/>
    <property type="molecule type" value="Genomic_DNA"/>
</dbReference>
<dbReference type="EMBL" id="X01801">
    <property type="protein sequence ID" value="CAA25932.1"/>
    <property type="molecule type" value="Genomic_DNA"/>
</dbReference>
<dbReference type="EMBL" id="M11434">
    <property type="protein sequence ID" value="AAA39819.1"/>
    <property type="molecule type" value="mRNA"/>
</dbReference>
<dbReference type="EMBL" id="BC034518">
    <property type="protein sequence ID" value="AAH34518.1"/>
    <property type="molecule type" value="mRNA"/>
</dbReference>
<dbReference type="CCDS" id="CCDS21200.1"/>
<dbReference type="PIR" id="B91005">
    <property type="entry name" value="NGMSA"/>
</dbReference>
<dbReference type="RefSeq" id="NP_035045.2">
    <property type="nucleotide sequence ID" value="NM_010915.4"/>
</dbReference>
<dbReference type="PDB" id="1SGF">
    <property type="method" value="X-ray"/>
    <property type="resolution" value="3.15 A"/>
    <property type="chains" value="A/X=17-256"/>
</dbReference>
<dbReference type="PDBsum" id="1SGF"/>
<dbReference type="SMR" id="P00757"/>
<dbReference type="FunCoup" id="P00757">
    <property type="interactions" value="1113"/>
</dbReference>
<dbReference type="STRING" id="10090.ENSMUSP00000076576"/>
<dbReference type="MEROPS" id="S01.931"/>
<dbReference type="PaxDb" id="10090-ENSMUSP00000076576"/>
<dbReference type="PeptideAtlas" id="P00757"/>
<dbReference type="ProteomicsDB" id="269140"/>
<dbReference type="DNASU" id="18048"/>
<dbReference type="Ensembl" id="ENSMUST00000077354.5">
    <property type="protein sequence ID" value="ENSMUSP00000076576.5"/>
    <property type="gene ID" value="ENSMUSG00000066513.5"/>
</dbReference>
<dbReference type="GeneID" id="18048"/>
<dbReference type="KEGG" id="mmu:18048"/>
<dbReference type="UCSC" id="uc009gom.2">
    <property type="organism name" value="mouse"/>
</dbReference>
<dbReference type="AGR" id="MGI:97320"/>
<dbReference type="CTD" id="18048"/>
<dbReference type="MGI" id="MGI:97320">
    <property type="gene designation" value="Klk1b4"/>
</dbReference>
<dbReference type="VEuPathDB" id="HostDB:ENSMUSG00000066513"/>
<dbReference type="eggNOG" id="KOG3627">
    <property type="taxonomic scope" value="Eukaryota"/>
</dbReference>
<dbReference type="GeneTree" id="ENSGT01020000230389"/>
<dbReference type="HOGENOM" id="CLU_006842_1_1_1"/>
<dbReference type="InParanoid" id="P00757"/>
<dbReference type="OrthoDB" id="10061449at2759"/>
<dbReference type="PhylomeDB" id="P00757"/>
<dbReference type="TreeFam" id="TF331065"/>
<dbReference type="Reactome" id="R-MMU-1592389">
    <property type="pathway name" value="Activation of Matrix Metalloproteinases"/>
</dbReference>
<dbReference type="BioGRID-ORCS" id="18048">
    <property type="hits" value="0 hits in 77 CRISPR screens"/>
</dbReference>
<dbReference type="ChiTaRS" id="Klk1b4">
    <property type="organism name" value="mouse"/>
</dbReference>
<dbReference type="EvolutionaryTrace" id="P00757"/>
<dbReference type="PRO" id="PR:P00757"/>
<dbReference type="Proteomes" id="UP000000589">
    <property type="component" value="Chromosome 7"/>
</dbReference>
<dbReference type="RNAct" id="P00757">
    <property type="molecule type" value="protein"/>
</dbReference>
<dbReference type="Bgee" id="ENSMUSG00000066513">
    <property type="expression patterns" value="Expressed in submandibular gland and 45 other cell types or tissues"/>
</dbReference>
<dbReference type="ExpressionAtlas" id="P00757">
    <property type="expression patterns" value="baseline and differential"/>
</dbReference>
<dbReference type="GO" id="GO:0008083">
    <property type="term" value="F:growth factor activity"/>
    <property type="evidence" value="ECO:0007669"/>
    <property type="project" value="UniProtKB-KW"/>
</dbReference>
<dbReference type="GO" id="GO:0046872">
    <property type="term" value="F:metal ion binding"/>
    <property type="evidence" value="ECO:0007669"/>
    <property type="project" value="UniProtKB-KW"/>
</dbReference>
<dbReference type="GO" id="GO:0004252">
    <property type="term" value="F:serine-type endopeptidase activity"/>
    <property type="evidence" value="ECO:0007669"/>
    <property type="project" value="InterPro"/>
</dbReference>
<dbReference type="GO" id="GO:0051897">
    <property type="term" value="P:positive regulation of phosphatidylinositol 3-kinase/protein kinase B signal transduction"/>
    <property type="evidence" value="ECO:0000314"/>
    <property type="project" value="MGI"/>
</dbReference>
<dbReference type="GO" id="GO:0006508">
    <property type="term" value="P:proteolysis"/>
    <property type="evidence" value="ECO:0007669"/>
    <property type="project" value="InterPro"/>
</dbReference>
<dbReference type="GO" id="GO:0007264">
    <property type="term" value="P:small GTPase-mediated signal transduction"/>
    <property type="evidence" value="ECO:0000314"/>
    <property type="project" value="MGI"/>
</dbReference>
<dbReference type="CDD" id="cd00190">
    <property type="entry name" value="Tryp_SPc"/>
    <property type="match status" value="1"/>
</dbReference>
<dbReference type="FunFam" id="2.40.10.10:FF:000032">
    <property type="entry name" value="Kallikrein 1-related peptidase C9"/>
    <property type="match status" value="1"/>
</dbReference>
<dbReference type="FunFam" id="2.40.10.10:FF:000042">
    <property type="entry name" value="Kallikrein 1-related peptidase C9"/>
    <property type="match status" value="1"/>
</dbReference>
<dbReference type="Gene3D" id="2.40.10.10">
    <property type="entry name" value="Trypsin-like serine proteases"/>
    <property type="match status" value="2"/>
</dbReference>
<dbReference type="InterPro" id="IPR009003">
    <property type="entry name" value="Peptidase_S1_PA"/>
</dbReference>
<dbReference type="InterPro" id="IPR043504">
    <property type="entry name" value="Peptidase_S1_PA_chymotrypsin"/>
</dbReference>
<dbReference type="InterPro" id="IPR001314">
    <property type="entry name" value="Peptidase_S1A"/>
</dbReference>
<dbReference type="InterPro" id="IPR001254">
    <property type="entry name" value="Trypsin_dom"/>
</dbReference>
<dbReference type="InterPro" id="IPR018114">
    <property type="entry name" value="TRYPSIN_HIS"/>
</dbReference>
<dbReference type="PANTHER" id="PTHR24271:SF47">
    <property type="entry name" value="KALLIKREIN-1"/>
    <property type="match status" value="1"/>
</dbReference>
<dbReference type="PANTHER" id="PTHR24271">
    <property type="entry name" value="KALLIKREIN-RELATED"/>
    <property type="match status" value="1"/>
</dbReference>
<dbReference type="Pfam" id="PF00089">
    <property type="entry name" value="Trypsin"/>
    <property type="match status" value="1"/>
</dbReference>
<dbReference type="PRINTS" id="PR00722">
    <property type="entry name" value="CHYMOTRYPSIN"/>
</dbReference>
<dbReference type="SMART" id="SM00020">
    <property type="entry name" value="Tryp_SPc"/>
    <property type="match status" value="1"/>
</dbReference>
<dbReference type="SUPFAM" id="SSF50494">
    <property type="entry name" value="Trypsin-like serine proteases"/>
    <property type="match status" value="1"/>
</dbReference>
<dbReference type="PROSITE" id="PS50240">
    <property type="entry name" value="TRYPSIN_DOM"/>
    <property type="match status" value="1"/>
</dbReference>
<dbReference type="PROSITE" id="PS00134">
    <property type="entry name" value="TRYPSIN_HIS"/>
    <property type="match status" value="1"/>
</dbReference>
<reference key="1">
    <citation type="journal article" date="1985" name="EMBO J.">
        <title>Genes for the alpha and gamma subunits of mouse nerve growth factor are contiguous.</title>
        <authorList>
            <person name="Evans B.A."/>
            <person name="Richards R.I."/>
        </authorList>
    </citation>
    <scope>NUCLEOTIDE SEQUENCE [GENOMIC DNA]</scope>
</reference>
<reference key="2">
    <citation type="journal article" date="1984" name="Biochemistry">
        <title>Mouse 7S nerve growth factor: complete sequence of a cDNA coding for the alpha-subunit precursor and its relationship to serine proteases.</title>
        <authorList>
            <person name="Isackson P.J."/>
            <person name="Ullrich A."/>
            <person name="Bradshaw R.A."/>
        </authorList>
    </citation>
    <scope>NUCLEOTIDE SEQUENCE [MRNA]</scope>
</reference>
<reference key="3">
    <citation type="journal article" date="2004" name="Genome Res.">
        <title>The status, quality, and expansion of the NIH full-length cDNA project: the Mammalian Gene Collection (MGC).</title>
        <authorList>
            <consortium name="The MGC Project Team"/>
        </authorList>
    </citation>
    <scope>NUCLEOTIDE SEQUENCE [LARGE SCALE MRNA]</scope>
    <source>
        <strain>FVB/N</strain>
        <tissue>Salivary gland</tissue>
    </source>
</reference>
<reference key="4">
    <citation type="journal article" date="1984" name="Biochemistry">
        <title>7S Nerve growth factor alpha and gamma subunits are closely related proteins.</title>
        <authorList>
            <person name="Ronne H."/>
            <person name="Anundi H."/>
            <person name="Rask L."/>
            <person name="Peterson P.A."/>
        </authorList>
    </citation>
    <scope>PROTEIN SEQUENCE OF 18-47; 113-141 AND 162-178</scope>
</reference>
<reference key="5">
    <citation type="journal article" date="1997" name="Structure">
        <title>Structure of mouse 7S NGF: a complex of nerve growth factor with four binding proteins.</title>
        <authorList>
            <person name="Bax B."/>
            <person name="Blundell T.L."/>
            <person name="Murray-Rust J."/>
            <person name="McDonald N.Q."/>
        </authorList>
    </citation>
    <scope>X-RAY CRYSTALLOGRAPHY (3.15 ANGSTROMS) OF 7S COMPLEX</scope>
    <source>
        <strain>Swiss Webster</strain>
        <tissue>Submandibular gland</tissue>
    </source>
</reference>
<accession>P00757</accession>
<keyword id="KW-0002">3D-structure</keyword>
<keyword id="KW-0903">Direct protein sequencing</keyword>
<keyword id="KW-1015">Disulfide bond</keyword>
<keyword id="KW-0339">Growth factor</keyword>
<keyword id="KW-0479">Metal-binding</keyword>
<keyword id="KW-1185">Reference proteome</keyword>
<keyword id="KW-0721">Serine protease homolog</keyword>
<keyword id="KW-0732">Signal</keyword>
<keyword id="KW-0862">Zinc</keyword>
<evidence type="ECO:0000255" key="1">
    <source>
        <dbReference type="PROSITE-ProRule" id="PRU00274"/>
    </source>
</evidence>
<evidence type="ECO:0000269" key="2">
    <source>
    </source>
</evidence>
<evidence type="ECO:0000305" key="3"/>
<evidence type="ECO:0007829" key="4">
    <source>
        <dbReference type="PDB" id="1SGF"/>
    </source>
</evidence>
<organism>
    <name type="scientific">Mus musculus</name>
    <name type="common">Mouse</name>
    <dbReference type="NCBI Taxonomy" id="10090"/>
    <lineage>
        <taxon>Eukaryota</taxon>
        <taxon>Metazoa</taxon>
        <taxon>Chordata</taxon>
        <taxon>Craniata</taxon>
        <taxon>Vertebrata</taxon>
        <taxon>Euteleostomi</taxon>
        <taxon>Mammalia</taxon>
        <taxon>Eutheria</taxon>
        <taxon>Euarchontoglires</taxon>
        <taxon>Glires</taxon>
        <taxon>Rodentia</taxon>
        <taxon>Myomorpha</taxon>
        <taxon>Muroidea</taxon>
        <taxon>Muridae</taxon>
        <taxon>Murinae</taxon>
        <taxon>Mus</taxon>
        <taxon>Mus</taxon>
    </lineage>
</organism>
<feature type="signal peptide" evidence="2">
    <location>
        <begin position="1"/>
        <end position="17"/>
    </location>
</feature>
<feature type="chain" id="PRO_0000027972" description="Kallikrein 1-related peptidase-like b4">
    <location>
        <begin position="18"/>
        <end position="256"/>
    </location>
</feature>
<feature type="domain" description="Peptidase S1" evidence="1">
    <location>
        <begin position="18"/>
        <end position="253"/>
    </location>
</feature>
<feature type="region of interest" description="Activation peptide homolog">
    <location>
        <begin position="18"/>
        <end position="24"/>
    </location>
</feature>
<feature type="binding site">
    <location>
        <position position="77"/>
    </location>
    <ligand>
        <name>Zn(2+)</name>
        <dbReference type="ChEBI" id="CHEBI:29105"/>
    </ligand>
</feature>
<feature type="binding site">
    <location>
        <position position="84"/>
    </location>
    <ligand>
        <name>Zn(2+)</name>
        <dbReference type="ChEBI" id="CHEBI:29105"/>
    </ligand>
</feature>
<feature type="disulfide bond" evidence="1">
    <location>
        <begin position="45"/>
        <end position="61"/>
    </location>
</feature>
<feature type="disulfide bond" evidence="1">
    <location>
        <begin position="147"/>
        <end position="214"/>
    </location>
</feature>
<feature type="disulfide bond" evidence="1">
    <location>
        <begin position="179"/>
        <end position="193"/>
    </location>
</feature>
<feature type="disulfide bond" evidence="1">
    <location>
        <begin position="204"/>
        <end position="229"/>
    </location>
</feature>
<feature type="sequence variant">
    <original>E</original>
    <variation>K</variation>
    <location>
        <position position="184"/>
    </location>
</feature>
<feature type="sequence conflict" description="In Ref. 4; AA sequence." evidence="3" ref="4">
    <original>Q</original>
    <variation>L</variation>
    <location>
        <position position="44"/>
    </location>
</feature>
<feature type="sequence conflict" description="In Ref. 4; AA sequence." evidence="3" ref="4">
    <original>E</original>
    <variation>C</variation>
    <location>
        <position position="140"/>
    </location>
</feature>
<feature type="strand" evidence="4">
    <location>
        <begin position="34"/>
        <end position="38"/>
    </location>
</feature>
<feature type="strand" evidence="4">
    <location>
        <begin position="45"/>
        <end position="49"/>
    </location>
</feature>
<feature type="strand" evidence="4">
    <location>
        <begin position="51"/>
        <end position="57"/>
    </location>
</feature>
<feature type="helix" evidence="4">
    <location>
        <begin position="59"/>
        <end position="61"/>
    </location>
</feature>
<feature type="strand" evidence="4">
    <location>
        <begin position="67"/>
        <end position="70"/>
    </location>
</feature>
<feature type="strand" evidence="4">
    <location>
        <begin position="83"/>
        <end position="92"/>
    </location>
</feature>
<feature type="helix" evidence="4">
    <location>
        <begin position="98"/>
        <end position="100"/>
    </location>
</feature>
<feature type="strand" evidence="4">
    <location>
        <begin position="117"/>
        <end position="123"/>
    </location>
</feature>
<feature type="strand" evidence="4">
    <location>
        <begin position="146"/>
        <end position="149"/>
    </location>
</feature>
<feature type="strand" evidence="4">
    <location>
        <begin position="169"/>
        <end position="174"/>
    </location>
</feature>
<feature type="helix" evidence="4">
    <location>
        <begin position="177"/>
        <end position="180"/>
    </location>
</feature>
<feature type="strand" evidence="4">
    <location>
        <begin position="184"/>
        <end position="186"/>
    </location>
</feature>
<feature type="strand" evidence="4">
    <location>
        <begin position="191"/>
        <end position="196"/>
    </location>
</feature>
<feature type="strand" evidence="4">
    <location>
        <begin position="198"/>
        <end position="203"/>
    </location>
</feature>
<feature type="strand" evidence="4">
    <location>
        <begin position="211"/>
        <end position="214"/>
    </location>
</feature>
<feature type="strand" evidence="4">
    <location>
        <begin position="217"/>
        <end position="222"/>
    </location>
</feature>
<feature type="strand" evidence="4">
    <location>
        <begin position="236"/>
        <end position="241"/>
    </location>
</feature>
<feature type="helix" evidence="4">
    <location>
        <begin position="242"/>
        <end position="244"/>
    </location>
</feature>
<feature type="helix" evidence="4">
    <location>
        <begin position="245"/>
        <end position="253"/>
    </location>
</feature>
<proteinExistence type="evidence at protein level"/>
<name>K1KB4_MOUSE</name>
<gene>
    <name type="primary">Klk1b4</name>
    <name type="synonym">Klk-4</name>
    <name type="synonym">Klk4</name>
    <name type="synonym">Ngfa</name>
</gene>
<sequence>MWFLILFLALSLGGIDAAPPVQSQVDCENSQPWHVAVYRFNKYQCGGVLLDRNWVLTAAHCYNDKYQVWLGKNNFLEDEPSDQHRLVSKAIPHPDFNMSLLNEHTPQPEDDYSNDLMLLRLSKPADITDVVKPITLPTEEPKLGSTCLASGWGSTTPIKFKYPDDLQCVNLKLLPNEDCDKAHEMKVTDAMLCAGEMDGGSYTCEHDSGGPLICDGILQGITSWGPEPCGEPTEPSVYTKLIKFSSWIRETMANNP</sequence>
<protein>
    <recommendedName>
        <fullName>Kallikrein 1-related peptidase-like b4</fullName>
    </recommendedName>
    <alternativeName>
        <fullName>7S nerve growth factor alpha chain</fullName>
    </alternativeName>
    <alternativeName>
        <fullName>Alpha-NGF</fullName>
    </alternativeName>
</protein>
<comment type="cofactor">
    <cofactor>
        <name>Zn(2+)</name>
        <dbReference type="ChEBI" id="CHEBI:29105"/>
    </cofactor>
    <text>Binds 2 Zn(2+) ions per 7S complex. The Zn(2+) ions are bound at the alpha-gamma interfaces.</text>
</comment>
<comment type="subunit">
    <text>7S nerve growth factor is composed of two alpha chains, a beta dimer composed of identical chains, and two gamma chains.</text>
</comment>
<comment type="PTM">
    <text>The presence of Gln-24 prevents cleavage of the activation peptide, which remains attached at the amino end of the mature alpha chain.</text>
</comment>
<comment type="similarity">
    <text evidence="1">Belongs to the peptidase S1 family. Kallikrein subfamily.</text>
</comment>
<comment type="caution">
    <text evidence="3">Has no demonstrable enzymatic activity. This may be due to several critical changes in its sequence, relative to those of related proteases.</text>
</comment>